<organismHost>
    <name type="scientific">Acanthamoeba polyphaga</name>
    <name type="common">Amoeba</name>
    <dbReference type="NCBI Taxonomy" id="5757"/>
</organismHost>
<gene>
    <name type="ordered locus">MIMI_L75</name>
</gene>
<protein>
    <recommendedName>
        <fullName>Uncharacterized protein L75</fullName>
    </recommendedName>
</protein>
<organism>
    <name type="scientific">Acanthamoeba polyphaga mimivirus</name>
    <name type="common">APMV</name>
    <dbReference type="NCBI Taxonomy" id="212035"/>
    <lineage>
        <taxon>Viruses</taxon>
        <taxon>Varidnaviria</taxon>
        <taxon>Bamfordvirae</taxon>
        <taxon>Nucleocytoviricota</taxon>
        <taxon>Megaviricetes</taxon>
        <taxon>Imitervirales</taxon>
        <taxon>Mimiviridae</taxon>
        <taxon>Megamimivirinae</taxon>
        <taxon>Mimivirus</taxon>
        <taxon>Mimivirus bradfordmassiliense</taxon>
    </lineage>
</organism>
<name>YL075_MIMIV</name>
<keyword id="KW-1185">Reference proteome</keyword>
<proteinExistence type="predicted"/>
<reference key="1">
    <citation type="journal article" date="2004" name="Science">
        <title>The 1.2-megabase genome sequence of Mimivirus.</title>
        <authorList>
            <person name="Raoult D."/>
            <person name="Audic S."/>
            <person name="Robert C."/>
            <person name="Abergel C."/>
            <person name="Renesto P."/>
            <person name="Ogata H."/>
            <person name="La Scola B."/>
            <person name="Susan M."/>
            <person name="Claverie J.-M."/>
        </authorList>
    </citation>
    <scope>NUCLEOTIDE SEQUENCE [LARGE SCALE GENOMIC DNA]</scope>
    <source>
        <strain>Rowbotham-Bradford</strain>
    </source>
</reference>
<sequence length="310" mass="37115">MLVMNIENFPPEILANISGFLTDKEFILLTTIDRFFYGLKKINKLKNPYDFKTIRTIIDEYLFSHLIIDSTDLFDILSKYNINTITLSDNFNGDIKMFYSLPNLNKIHVGLNYTDVDSITGIPDKIINKKEIILTLVSNKIAFDTYSKSLKRLEKKNFLKHTYPQIYNWESIYKIINKHFRIVFNALGKNFDSFTYKESYNLVKLILLFTDPKYKNVLTEYFSKFEILHKYQVLKFHPELRQCITKKNYHLPNFIKENSVIVKEFIYDIKFIHNHKFLYLKNTYEKIIKQHGFNNVNEYRDFLVKLNTHK</sequence>
<feature type="chain" id="PRO_0000071202" description="Uncharacterized protein L75">
    <location>
        <begin position="1"/>
        <end position="310"/>
    </location>
</feature>
<dbReference type="EMBL" id="AY653733">
    <property type="protein sequence ID" value="AAV50350.1"/>
    <property type="molecule type" value="Genomic_DNA"/>
</dbReference>
<dbReference type="KEGG" id="vg:9924670"/>
<dbReference type="Proteomes" id="UP000001134">
    <property type="component" value="Genome"/>
</dbReference>
<accession>Q5UPE8</accession>